<name>P2C28_ARATH</name>
<reference key="1">
    <citation type="journal article" date="1999" name="Nature">
        <title>Sequence and analysis of chromosome 2 of the plant Arabidopsis thaliana.</title>
        <authorList>
            <person name="Lin X."/>
            <person name="Kaul S."/>
            <person name="Rounsley S.D."/>
            <person name="Shea T.P."/>
            <person name="Benito M.-I."/>
            <person name="Town C.D."/>
            <person name="Fujii C.Y."/>
            <person name="Mason T.M."/>
            <person name="Bowman C.L."/>
            <person name="Barnstead M.E."/>
            <person name="Feldblyum T.V."/>
            <person name="Buell C.R."/>
            <person name="Ketchum K.A."/>
            <person name="Lee J.J."/>
            <person name="Ronning C.M."/>
            <person name="Koo H.L."/>
            <person name="Moffat K.S."/>
            <person name="Cronin L.A."/>
            <person name="Shen M."/>
            <person name="Pai G."/>
            <person name="Van Aken S."/>
            <person name="Umayam L."/>
            <person name="Tallon L.J."/>
            <person name="Gill J.E."/>
            <person name="Adams M.D."/>
            <person name="Carrera A.J."/>
            <person name="Creasy T.H."/>
            <person name="Goodman H.M."/>
            <person name="Somerville C.R."/>
            <person name="Copenhaver G.P."/>
            <person name="Preuss D."/>
            <person name="Nierman W.C."/>
            <person name="White O."/>
            <person name="Eisen J.A."/>
            <person name="Salzberg S.L."/>
            <person name="Fraser C.M."/>
            <person name="Venter J.C."/>
        </authorList>
    </citation>
    <scope>NUCLEOTIDE SEQUENCE [LARGE SCALE GENOMIC DNA]</scope>
    <source>
        <strain>cv. Columbia</strain>
    </source>
</reference>
<reference key="2">
    <citation type="journal article" date="2017" name="Plant J.">
        <title>Araport11: a complete reannotation of the Arabidopsis thaliana reference genome.</title>
        <authorList>
            <person name="Cheng C.Y."/>
            <person name="Krishnakumar V."/>
            <person name="Chan A.P."/>
            <person name="Thibaud-Nissen F."/>
            <person name="Schobel S."/>
            <person name="Town C.D."/>
        </authorList>
    </citation>
    <scope>GENOME REANNOTATION</scope>
    <source>
        <strain>cv. Columbia</strain>
    </source>
</reference>
<reference key="3">
    <citation type="submission" date="2004-09" db="EMBL/GenBank/DDBJ databases">
        <title>Large-scale analysis of RIKEN Arabidopsis full-length (RAFL) cDNAs.</title>
        <authorList>
            <person name="Totoki Y."/>
            <person name="Seki M."/>
            <person name="Ishida J."/>
            <person name="Nakajima M."/>
            <person name="Enju A."/>
            <person name="Kamiya A."/>
            <person name="Narusaka M."/>
            <person name="Shin-i T."/>
            <person name="Nakagawa M."/>
            <person name="Sakamoto N."/>
            <person name="Oishi K."/>
            <person name="Kohara Y."/>
            <person name="Kobayashi M."/>
            <person name="Toyoda A."/>
            <person name="Sakaki Y."/>
            <person name="Sakurai T."/>
            <person name="Iida K."/>
            <person name="Akiyama K."/>
            <person name="Satou M."/>
            <person name="Toyoda T."/>
            <person name="Konagaya A."/>
            <person name="Carninci P."/>
            <person name="Kawai J."/>
            <person name="Hayashizaki Y."/>
            <person name="Shinozaki K."/>
        </authorList>
    </citation>
    <scope>NUCLEOTIDE SEQUENCE [LARGE SCALE MRNA] OF 170-339 (ISOFORM 2)</scope>
    <source>
        <strain>cv. Columbia</strain>
    </source>
</reference>
<reference key="4">
    <citation type="journal article" date="2008" name="BMC Genomics">
        <title>Genome-wide and expression analysis of protein phosphatase 2C in rice and Arabidopsis.</title>
        <authorList>
            <person name="Xue T."/>
            <person name="Wang D."/>
            <person name="Zhang S."/>
            <person name="Ehlting J."/>
            <person name="Ni F."/>
            <person name="Jacab S."/>
            <person name="Zheng C."/>
            <person name="Zhong Y."/>
        </authorList>
    </citation>
    <scope>GENE FAMILY</scope>
    <scope>NOMENCLATURE</scope>
</reference>
<protein>
    <recommendedName>
        <fullName>Probable protein phosphatase 2C 28</fullName>
        <shortName>AtPP2C28</shortName>
        <ecNumber>3.1.3.16</ecNumber>
    </recommendedName>
</protein>
<gene>
    <name type="ordered locus">At2g34740</name>
    <name type="ORF">T29F13.5</name>
</gene>
<accession>O64583</accession>
<accession>F4IIV1</accession>
<accession>F4IIV2</accession>
<accession>Q681L4</accession>
<evidence type="ECO:0000250" key="1"/>
<evidence type="ECO:0000255" key="2">
    <source>
        <dbReference type="PROSITE-ProRule" id="PRU01082"/>
    </source>
</evidence>
<evidence type="ECO:0000303" key="3">
    <source ref="3"/>
</evidence>
<evidence type="ECO:0000305" key="4"/>
<proteinExistence type="evidence at transcript level"/>
<keyword id="KW-0025">Alternative splicing</keyword>
<keyword id="KW-0378">Hydrolase</keyword>
<keyword id="KW-0460">Magnesium</keyword>
<keyword id="KW-0464">Manganese</keyword>
<keyword id="KW-0479">Metal-binding</keyword>
<keyword id="KW-0904">Protein phosphatase</keyword>
<keyword id="KW-1185">Reference proteome</keyword>
<dbReference type="EC" id="3.1.3.16"/>
<dbReference type="EMBL" id="AC003096">
    <property type="protein sequence ID" value="AAC16260.1"/>
    <property type="status" value="ALT_SEQ"/>
    <property type="molecule type" value="Genomic_DNA"/>
</dbReference>
<dbReference type="EMBL" id="CP002685">
    <property type="protein sequence ID" value="AEC09016.1"/>
    <property type="molecule type" value="Genomic_DNA"/>
</dbReference>
<dbReference type="EMBL" id="CP002685">
    <property type="protein sequence ID" value="AEC09017.1"/>
    <property type="status" value="ALT_SEQ"/>
    <property type="molecule type" value="Genomic_DNA"/>
</dbReference>
<dbReference type="EMBL" id="AK175603">
    <property type="protein sequence ID" value="BAD43366.1"/>
    <property type="molecule type" value="mRNA"/>
</dbReference>
<dbReference type="PIR" id="T01361">
    <property type="entry name" value="T01361"/>
</dbReference>
<dbReference type="RefSeq" id="NP_001189678.1">
    <property type="nucleotide sequence ID" value="NM_001202749.1"/>
</dbReference>
<dbReference type="RefSeq" id="NP_181021.4">
    <molecule id="O64583-1"/>
    <property type="nucleotide sequence ID" value="NM_129028.4"/>
</dbReference>
<dbReference type="SMR" id="O64583"/>
<dbReference type="FunCoup" id="O64583">
    <property type="interactions" value="54"/>
</dbReference>
<dbReference type="STRING" id="3702.O64583"/>
<dbReference type="PaxDb" id="3702-AT2G34740.1"/>
<dbReference type="ProteomicsDB" id="248710">
    <molecule id="O64583-1"/>
</dbReference>
<dbReference type="EnsemblPlants" id="AT2G34740.1">
    <molecule id="O64583-1"/>
    <property type="protein sequence ID" value="AT2G34740.1"/>
    <property type="gene ID" value="AT2G34740"/>
</dbReference>
<dbReference type="GeneID" id="818039"/>
<dbReference type="Gramene" id="AT2G34740.1">
    <molecule id="O64583-1"/>
    <property type="protein sequence ID" value="AT2G34740.1"/>
    <property type="gene ID" value="AT2G34740"/>
</dbReference>
<dbReference type="KEGG" id="ath:AT2G34740"/>
<dbReference type="Araport" id="AT2G34740"/>
<dbReference type="TAIR" id="AT2G34740"/>
<dbReference type="eggNOG" id="KOG0698">
    <property type="taxonomic scope" value="Eukaryota"/>
</dbReference>
<dbReference type="HOGENOM" id="CLU_013173_0_1_1"/>
<dbReference type="InParanoid" id="O64583"/>
<dbReference type="OMA" id="MSNDEVW"/>
<dbReference type="PRO" id="PR:O64583"/>
<dbReference type="Proteomes" id="UP000006548">
    <property type="component" value="Chromosome 2"/>
</dbReference>
<dbReference type="ExpressionAtlas" id="O64583">
    <property type="expression patterns" value="baseline and differential"/>
</dbReference>
<dbReference type="GO" id="GO:0046872">
    <property type="term" value="F:metal ion binding"/>
    <property type="evidence" value="ECO:0007669"/>
    <property type="project" value="UniProtKB-KW"/>
</dbReference>
<dbReference type="GO" id="GO:0004722">
    <property type="term" value="F:protein serine/threonine phosphatase activity"/>
    <property type="evidence" value="ECO:0007669"/>
    <property type="project" value="UniProtKB-EC"/>
</dbReference>
<dbReference type="CDD" id="cd00143">
    <property type="entry name" value="PP2Cc"/>
    <property type="match status" value="1"/>
</dbReference>
<dbReference type="FunFam" id="3.60.40.10:FF:000010">
    <property type="entry name" value="Probable protein phosphatase 2C 39"/>
    <property type="match status" value="1"/>
</dbReference>
<dbReference type="Gene3D" id="3.60.40.10">
    <property type="entry name" value="PPM-type phosphatase domain"/>
    <property type="match status" value="1"/>
</dbReference>
<dbReference type="InterPro" id="IPR015655">
    <property type="entry name" value="PP2C"/>
</dbReference>
<dbReference type="InterPro" id="IPR036457">
    <property type="entry name" value="PPM-type-like_dom_sf"/>
</dbReference>
<dbReference type="InterPro" id="IPR001932">
    <property type="entry name" value="PPM-type_phosphatase-like_dom"/>
</dbReference>
<dbReference type="PANTHER" id="PTHR47992">
    <property type="entry name" value="PROTEIN PHOSPHATASE"/>
    <property type="match status" value="1"/>
</dbReference>
<dbReference type="Pfam" id="PF00481">
    <property type="entry name" value="PP2C"/>
    <property type="match status" value="1"/>
</dbReference>
<dbReference type="SMART" id="SM00331">
    <property type="entry name" value="PP2C_SIG"/>
    <property type="match status" value="1"/>
</dbReference>
<dbReference type="SMART" id="SM00332">
    <property type="entry name" value="PP2Cc"/>
    <property type="match status" value="1"/>
</dbReference>
<dbReference type="SUPFAM" id="SSF81606">
    <property type="entry name" value="PP2C-like"/>
    <property type="match status" value="1"/>
</dbReference>
<dbReference type="PROSITE" id="PS51746">
    <property type="entry name" value="PPM_2"/>
    <property type="match status" value="1"/>
</dbReference>
<organism>
    <name type="scientific">Arabidopsis thaliana</name>
    <name type="common">Mouse-ear cress</name>
    <dbReference type="NCBI Taxonomy" id="3702"/>
    <lineage>
        <taxon>Eukaryota</taxon>
        <taxon>Viridiplantae</taxon>
        <taxon>Streptophyta</taxon>
        <taxon>Embryophyta</taxon>
        <taxon>Tracheophyta</taxon>
        <taxon>Spermatophyta</taxon>
        <taxon>Magnoliopsida</taxon>
        <taxon>eudicotyledons</taxon>
        <taxon>Gunneridae</taxon>
        <taxon>Pentapetalae</taxon>
        <taxon>rosids</taxon>
        <taxon>malvids</taxon>
        <taxon>Brassicales</taxon>
        <taxon>Brassicaceae</taxon>
        <taxon>Camelineae</taxon>
        <taxon>Arabidopsis</taxon>
    </lineage>
</organism>
<feature type="chain" id="PRO_0000367957" description="Probable protein phosphatase 2C 28">
    <location>
        <begin position="1"/>
        <end position="339"/>
    </location>
</feature>
<feature type="domain" description="PPM-type phosphatase" evidence="2">
    <location>
        <begin position="87"/>
        <end position="334"/>
    </location>
</feature>
<feature type="binding site" evidence="1">
    <location>
        <position position="124"/>
    </location>
    <ligand>
        <name>Mn(2+)</name>
        <dbReference type="ChEBI" id="CHEBI:29035"/>
        <label>1</label>
    </ligand>
</feature>
<feature type="binding site" evidence="1">
    <location>
        <position position="124"/>
    </location>
    <ligand>
        <name>Mn(2+)</name>
        <dbReference type="ChEBI" id="CHEBI:29035"/>
        <label>2</label>
    </ligand>
</feature>
<feature type="binding site" evidence="1">
    <location>
        <position position="125"/>
    </location>
    <ligand>
        <name>Mn(2+)</name>
        <dbReference type="ChEBI" id="CHEBI:29035"/>
        <label>1</label>
    </ligand>
</feature>
<feature type="binding site" evidence="1">
    <location>
        <position position="286"/>
    </location>
    <ligand>
        <name>Mn(2+)</name>
        <dbReference type="ChEBI" id="CHEBI:29035"/>
        <label>2</label>
    </ligand>
</feature>
<feature type="binding site" evidence="1">
    <location>
        <position position="325"/>
    </location>
    <ligand>
        <name>Mn(2+)</name>
        <dbReference type="ChEBI" id="CHEBI:29035"/>
        <label>2</label>
    </ligand>
</feature>
<feature type="splice variant" id="VSP_041311" description="In isoform 2." evidence="3">
    <original>MSNDEVWDQIKKRGNAEEAAKMLIDKALARGSKDDISCVVVSFLQWID</original>
    <variation>STYECHGTLLIGAPKDRTKS</variation>
    <location>
        <begin position="292"/>
        <end position="339"/>
    </location>
</feature>
<sequence>MKKTIKNSTHRPEDILVHAIKKRRSASGDVKNAVKLKEGEDYLRVEEEIPHDDNVVVIDDGCDHDHDVDDNDDDEEENGRYCRREFDHGYHLVKGQMGHGMEDFIVADTKTVKGHNLGLYAIFDGHSGSDVADYLQNHLFDNILSQPDFWRNPKKAIKRAYKSTDDYILQNVVGPRGGSTAVTAIVIDGKKIVVANVGDSRAILCRESDVVKQITVDHEPDKERDLVKSKGGFVSQKPGNVPRVDGQLAMTRAFGDGGLKEHISVIPNIEIAEIHDDTKFLILASDGLWKVMSNDEVWDQIKKRGNAEEAAKMLIDKALARGSKDDISCVVVSFLQWID</sequence>
<comment type="catalytic activity">
    <reaction>
        <text>O-phospho-L-seryl-[protein] + H2O = L-seryl-[protein] + phosphate</text>
        <dbReference type="Rhea" id="RHEA:20629"/>
        <dbReference type="Rhea" id="RHEA-COMP:9863"/>
        <dbReference type="Rhea" id="RHEA-COMP:11604"/>
        <dbReference type="ChEBI" id="CHEBI:15377"/>
        <dbReference type="ChEBI" id="CHEBI:29999"/>
        <dbReference type="ChEBI" id="CHEBI:43474"/>
        <dbReference type="ChEBI" id="CHEBI:83421"/>
        <dbReference type="EC" id="3.1.3.16"/>
    </reaction>
</comment>
<comment type="catalytic activity">
    <reaction>
        <text>O-phospho-L-threonyl-[protein] + H2O = L-threonyl-[protein] + phosphate</text>
        <dbReference type="Rhea" id="RHEA:47004"/>
        <dbReference type="Rhea" id="RHEA-COMP:11060"/>
        <dbReference type="Rhea" id="RHEA-COMP:11605"/>
        <dbReference type="ChEBI" id="CHEBI:15377"/>
        <dbReference type="ChEBI" id="CHEBI:30013"/>
        <dbReference type="ChEBI" id="CHEBI:43474"/>
        <dbReference type="ChEBI" id="CHEBI:61977"/>
        <dbReference type="EC" id="3.1.3.16"/>
    </reaction>
</comment>
<comment type="cofactor">
    <cofactor evidence="1">
        <name>Mg(2+)</name>
        <dbReference type="ChEBI" id="CHEBI:18420"/>
    </cofactor>
    <cofactor evidence="1">
        <name>Mn(2+)</name>
        <dbReference type="ChEBI" id="CHEBI:29035"/>
    </cofactor>
    <text evidence="1">Binds 2 magnesium or manganese ions per subunit.</text>
</comment>
<comment type="alternative products">
    <event type="alternative splicing"/>
    <isoform>
        <id>O64583-1</id>
        <name>1</name>
        <sequence type="displayed"/>
    </isoform>
    <isoform>
        <id>O64583-2</id>
        <name>2</name>
        <sequence type="described" ref="VSP_041311"/>
    </isoform>
</comment>
<comment type="miscellaneous">
    <molecule>Isoform 2</molecule>
    <text evidence="4">May be due to an intron retention.</text>
</comment>
<comment type="similarity">
    <text evidence="4">Belongs to the PP2C family.</text>
</comment>
<comment type="sequence caution" evidence="4">
    <conflict type="erroneous gene model prediction">
        <sequence resource="EMBL-CDS" id="AAC16260"/>
    </conflict>
</comment>
<comment type="sequence caution" evidence="4">
    <conflict type="erroneous gene model prediction">
        <sequence resource="EMBL-CDS" id="AEC09017"/>
    </conflict>
</comment>